<name>RBFA_SOLUE</name>
<comment type="function">
    <text evidence="1">One of several proteins that assist in the late maturation steps of the functional core of the 30S ribosomal subunit. Associates with free 30S ribosomal subunits (but not with 30S subunits that are part of 70S ribosomes or polysomes). Required for efficient processing of 16S rRNA. May interact with the 5'-terminal helix region of 16S rRNA.</text>
</comment>
<comment type="subunit">
    <text evidence="1">Monomer. Binds 30S ribosomal subunits, but not 50S ribosomal subunits or 70S ribosomes.</text>
</comment>
<comment type="subcellular location">
    <subcellularLocation>
        <location evidence="1">Cytoplasm</location>
    </subcellularLocation>
</comment>
<comment type="similarity">
    <text evidence="1">Belongs to the RbfA family.</text>
</comment>
<organism>
    <name type="scientific">Solibacter usitatus (strain Ellin6076)</name>
    <dbReference type="NCBI Taxonomy" id="234267"/>
    <lineage>
        <taxon>Bacteria</taxon>
        <taxon>Pseudomonadati</taxon>
        <taxon>Acidobacteriota</taxon>
        <taxon>Terriglobia</taxon>
        <taxon>Bryobacterales</taxon>
        <taxon>Solibacteraceae</taxon>
        <taxon>Candidatus Solibacter</taxon>
    </lineage>
</organism>
<reference key="1">
    <citation type="journal article" date="2009" name="Appl. Environ. Microbiol.">
        <title>Three genomes from the phylum Acidobacteria provide insight into the lifestyles of these microorganisms in soils.</title>
        <authorList>
            <person name="Ward N.L."/>
            <person name="Challacombe J.F."/>
            <person name="Janssen P.H."/>
            <person name="Henrissat B."/>
            <person name="Coutinho P.M."/>
            <person name="Wu M."/>
            <person name="Xie G."/>
            <person name="Haft D.H."/>
            <person name="Sait M."/>
            <person name="Badger J."/>
            <person name="Barabote R.D."/>
            <person name="Bradley B."/>
            <person name="Brettin T.S."/>
            <person name="Brinkac L.M."/>
            <person name="Bruce D."/>
            <person name="Creasy T."/>
            <person name="Daugherty S.C."/>
            <person name="Davidsen T.M."/>
            <person name="DeBoy R.T."/>
            <person name="Detter J.C."/>
            <person name="Dodson R.J."/>
            <person name="Durkin A.S."/>
            <person name="Ganapathy A."/>
            <person name="Gwinn-Giglio M."/>
            <person name="Han C.S."/>
            <person name="Khouri H."/>
            <person name="Kiss H."/>
            <person name="Kothari S.P."/>
            <person name="Madupu R."/>
            <person name="Nelson K.E."/>
            <person name="Nelson W.C."/>
            <person name="Paulsen I."/>
            <person name="Penn K."/>
            <person name="Ren Q."/>
            <person name="Rosovitz M.J."/>
            <person name="Selengut J.D."/>
            <person name="Shrivastava S."/>
            <person name="Sullivan S.A."/>
            <person name="Tapia R."/>
            <person name="Thompson L.S."/>
            <person name="Watkins K.L."/>
            <person name="Yang Q."/>
            <person name="Yu C."/>
            <person name="Zafar N."/>
            <person name="Zhou L."/>
            <person name="Kuske C.R."/>
        </authorList>
    </citation>
    <scope>NUCLEOTIDE SEQUENCE [LARGE SCALE GENOMIC DNA]</scope>
    <source>
        <strain>Ellin6076</strain>
    </source>
</reference>
<gene>
    <name evidence="1" type="primary">rbfA</name>
    <name type="ordered locus">Acid_5183</name>
</gene>
<evidence type="ECO:0000255" key="1">
    <source>
        <dbReference type="HAMAP-Rule" id="MF_00003"/>
    </source>
</evidence>
<dbReference type="EMBL" id="CP000473">
    <property type="protein sequence ID" value="ABJ86136.1"/>
    <property type="molecule type" value="Genomic_DNA"/>
</dbReference>
<dbReference type="SMR" id="Q01W29"/>
<dbReference type="STRING" id="234267.Acid_5183"/>
<dbReference type="KEGG" id="sus:Acid_5183"/>
<dbReference type="eggNOG" id="COG0858">
    <property type="taxonomic scope" value="Bacteria"/>
</dbReference>
<dbReference type="HOGENOM" id="CLU_089475_6_2_0"/>
<dbReference type="InParanoid" id="Q01W29"/>
<dbReference type="OrthoDB" id="129771at2"/>
<dbReference type="GO" id="GO:0005829">
    <property type="term" value="C:cytosol"/>
    <property type="evidence" value="ECO:0007669"/>
    <property type="project" value="TreeGrafter"/>
</dbReference>
<dbReference type="GO" id="GO:0043024">
    <property type="term" value="F:ribosomal small subunit binding"/>
    <property type="evidence" value="ECO:0007669"/>
    <property type="project" value="TreeGrafter"/>
</dbReference>
<dbReference type="GO" id="GO:0030490">
    <property type="term" value="P:maturation of SSU-rRNA"/>
    <property type="evidence" value="ECO:0007669"/>
    <property type="project" value="UniProtKB-UniRule"/>
</dbReference>
<dbReference type="Gene3D" id="3.30.300.20">
    <property type="match status" value="1"/>
</dbReference>
<dbReference type="HAMAP" id="MF_00003">
    <property type="entry name" value="RbfA"/>
    <property type="match status" value="1"/>
</dbReference>
<dbReference type="InterPro" id="IPR015946">
    <property type="entry name" value="KH_dom-like_a/b"/>
</dbReference>
<dbReference type="InterPro" id="IPR000238">
    <property type="entry name" value="RbfA"/>
</dbReference>
<dbReference type="InterPro" id="IPR023799">
    <property type="entry name" value="RbfA_dom_sf"/>
</dbReference>
<dbReference type="InterPro" id="IPR020053">
    <property type="entry name" value="Ribosome-bd_factorA_CS"/>
</dbReference>
<dbReference type="NCBIfam" id="TIGR00082">
    <property type="entry name" value="rbfA"/>
    <property type="match status" value="1"/>
</dbReference>
<dbReference type="PANTHER" id="PTHR33515">
    <property type="entry name" value="RIBOSOME-BINDING FACTOR A, CHLOROPLASTIC-RELATED"/>
    <property type="match status" value="1"/>
</dbReference>
<dbReference type="PANTHER" id="PTHR33515:SF1">
    <property type="entry name" value="RIBOSOME-BINDING FACTOR A, CHLOROPLASTIC-RELATED"/>
    <property type="match status" value="1"/>
</dbReference>
<dbReference type="Pfam" id="PF02033">
    <property type="entry name" value="RBFA"/>
    <property type="match status" value="1"/>
</dbReference>
<dbReference type="SUPFAM" id="SSF89919">
    <property type="entry name" value="Ribosome-binding factor A, RbfA"/>
    <property type="match status" value="1"/>
</dbReference>
<dbReference type="PROSITE" id="PS01319">
    <property type="entry name" value="RBFA"/>
    <property type="match status" value="1"/>
</dbReference>
<proteinExistence type="inferred from homology"/>
<protein>
    <recommendedName>
        <fullName evidence="1">Ribosome-binding factor A</fullName>
    </recommendedName>
</protein>
<accession>Q01W29</accession>
<sequence length="123" mass="14287">MDERRTLRVSEAVREELSEIISFEMDDPRVLEAEVTEVMVSPDSRHASIKIACRGDEKKQNHAIAALEHAAGYLRRELASRLQLRHVPELHFERDKNPDVESRVDFLLRRARRTKGREENPSS</sequence>
<feature type="chain" id="PRO_1000000216" description="Ribosome-binding factor A">
    <location>
        <begin position="1"/>
        <end position="123"/>
    </location>
</feature>
<keyword id="KW-0963">Cytoplasm</keyword>
<keyword id="KW-0690">Ribosome biogenesis</keyword>